<dbReference type="EMBL" id="CP001010">
    <property type="protein sequence ID" value="ACB43386.1"/>
    <property type="molecule type" value="Genomic_DNA"/>
</dbReference>
<dbReference type="SMR" id="B1XSQ9"/>
<dbReference type="STRING" id="452638.Pnec_0058"/>
<dbReference type="KEGG" id="pne:Pnec_0058"/>
<dbReference type="eggNOG" id="COG0255">
    <property type="taxonomic scope" value="Bacteria"/>
</dbReference>
<dbReference type="HOGENOM" id="CLU_158491_1_1_4"/>
<dbReference type="OrthoDB" id="9815192at2"/>
<dbReference type="GO" id="GO:1990904">
    <property type="term" value="C:ribonucleoprotein complex"/>
    <property type="evidence" value="ECO:0007669"/>
    <property type="project" value="UniProtKB-KW"/>
</dbReference>
<dbReference type="GO" id="GO:0005840">
    <property type="term" value="C:ribosome"/>
    <property type="evidence" value="ECO:0007669"/>
    <property type="project" value="UniProtKB-KW"/>
</dbReference>
<dbReference type="GO" id="GO:0003735">
    <property type="term" value="F:structural constituent of ribosome"/>
    <property type="evidence" value="ECO:0007669"/>
    <property type="project" value="InterPro"/>
</dbReference>
<dbReference type="GO" id="GO:0006412">
    <property type="term" value="P:translation"/>
    <property type="evidence" value="ECO:0007669"/>
    <property type="project" value="UniProtKB-UniRule"/>
</dbReference>
<dbReference type="CDD" id="cd00427">
    <property type="entry name" value="Ribosomal_L29_HIP"/>
    <property type="match status" value="1"/>
</dbReference>
<dbReference type="Gene3D" id="6.10.140.1970">
    <property type="match status" value="1"/>
</dbReference>
<dbReference type="HAMAP" id="MF_00374">
    <property type="entry name" value="Ribosomal_uL29"/>
    <property type="match status" value="1"/>
</dbReference>
<dbReference type="InterPro" id="IPR001854">
    <property type="entry name" value="Ribosomal_uL29"/>
</dbReference>
<dbReference type="InterPro" id="IPR036049">
    <property type="entry name" value="Ribosomal_uL29_sf"/>
</dbReference>
<dbReference type="NCBIfam" id="TIGR00012">
    <property type="entry name" value="L29"/>
    <property type="match status" value="1"/>
</dbReference>
<dbReference type="Pfam" id="PF00831">
    <property type="entry name" value="Ribosomal_L29"/>
    <property type="match status" value="1"/>
</dbReference>
<dbReference type="SUPFAM" id="SSF46561">
    <property type="entry name" value="Ribosomal protein L29 (L29p)"/>
    <property type="match status" value="1"/>
</dbReference>
<sequence length="64" mass="7247">MKNIELASKDLNALNVELTELLKTGFKLRMQKGTQQLTNTSQLGKNKRDIARVKTFIAQKTAQK</sequence>
<evidence type="ECO:0000255" key="1">
    <source>
        <dbReference type="HAMAP-Rule" id="MF_00374"/>
    </source>
</evidence>
<evidence type="ECO:0000305" key="2"/>
<keyword id="KW-0687">Ribonucleoprotein</keyword>
<keyword id="KW-0689">Ribosomal protein</keyword>
<proteinExistence type="inferred from homology"/>
<gene>
    <name evidence="1" type="primary">rpmC</name>
    <name type="ordered locus">Pnec_0058</name>
</gene>
<name>RL29_POLNS</name>
<comment type="similarity">
    <text evidence="1">Belongs to the universal ribosomal protein uL29 family.</text>
</comment>
<organism>
    <name type="scientific">Polynucleobacter necessarius subsp. necessarius (strain STIR1)</name>
    <dbReference type="NCBI Taxonomy" id="452638"/>
    <lineage>
        <taxon>Bacteria</taxon>
        <taxon>Pseudomonadati</taxon>
        <taxon>Pseudomonadota</taxon>
        <taxon>Betaproteobacteria</taxon>
        <taxon>Burkholderiales</taxon>
        <taxon>Burkholderiaceae</taxon>
        <taxon>Polynucleobacter</taxon>
    </lineage>
</organism>
<feature type="chain" id="PRO_1000121796" description="Large ribosomal subunit protein uL29">
    <location>
        <begin position="1"/>
        <end position="64"/>
    </location>
</feature>
<reference key="1">
    <citation type="journal article" date="2013" name="Proc. Natl. Acad. Sci. U.S.A.">
        <title>Polynucleobacter necessarius, a model for genome reduction in both free-living and symbiotic bacteria.</title>
        <authorList>
            <person name="Boscaro V."/>
            <person name="Felletti M."/>
            <person name="Vannini C."/>
            <person name="Ackerman M.S."/>
            <person name="Chain P.S."/>
            <person name="Malfatti S."/>
            <person name="Vergez L.M."/>
            <person name="Shin M."/>
            <person name="Doak T.G."/>
            <person name="Lynch M."/>
            <person name="Petroni G."/>
        </authorList>
    </citation>
    <scope>NUCLEOTIDE SEQUENCE [LARGE SCALE GENOMIC DNA]</scope>
    <source>
        <strain>STIR1</strain>
    </source>
</reference>
<protein>
    <recommendedName>
        <fullName evidence="1">Large ribosomal subunit protein uL29</fullName>
    </recommendedName>
    <alternativeName>
        <fullName evidence="2">50S ribosomal protein L29</fullName>
    </alternativeName>
</protein>
<accession>B1XSQ9</accession>